<comment type="function">
    <text evidence="1">Located on the platform of the 30S subunit, it bridges several disparate RNA helices of the 16S rRNA. Forms part of the Shine-Dalgarno cleft in the 70S ribosome.</text>
</comment>
<comment type="subunit">
    <text evidence="1">Part of the 30S ribosomal subunit. Interacts with proteins S7 and S18. Binds to IF-3.</text>
</comment>
<comment type="similarity">
    <text evidence="1">Belongs to the universal ribosomal protein uS11 family.</text>
</comment>
<sequence>MAKAPTKSTRKRAKRQVADGMAHIHASFNNTIVTITDRQGNALSWATSGGSGFRGSRKSTPFAAQVAAERAGTAAQDYGLKNLEVFVKGPGPGRESAIRALNAAGYKITNITDVTPIPHNGCRPPKKRRV</sequence>
<organism>
    <name type="scientific">Pseudoalteromonas atlantica (strain T6c / ATCC BAA-1087)</name>
    <dbReference type="NCBI Taxonomy" id="3042615"/>
    <lineage>
        <taxon>Bacteria</taxon>
        <taxon>Pseudomonadati</taxon>
        <taxon>Pseudomonadota</taxon>
        <taxon>Gammaproteobacteria</taxon>
        <taxon>Alteromonadales</taxon>
        <taxon>Alteromonadaceae</taxon>
        <taxon>Paraglaciecola</taxon>
    </lineage>
</organism>
<protein>
    <recommendedName>
        <fullName evidence="1">Small ribosomal subunit protein uS11</fullName>
    </recommendedName>
    <alternativeName>
        <fullName evidence="2">30S ribosomal protein S11</fullName>
    </alternativeName>
</protein>
<keyword id="KW-0687">Ribonucleoprotein</keyword>
<keyword id="KW-0689">Ribosomal protein</keyword>
<keyword id="KW-0694">RNA-binding</keyword>
<keyword id="KW-0699">rRNA-binding</keyword>
<name>RS11_PSEA6</name>
<gene>
    <name evidence="1" type="primary">rpsK</name>
    <name type="ordered locus">Patl_1012</name>
</gene>
<accession>Q15X50</accession>
<reference key="1">
    <citation type="submission" date="2006-06" db="EMBL/GenBank/DDBJ databases">
        <title>Complete sequence of Pseudoalteromonas atlantica T6c.</title>
        <authorList>
            <consortium name="US DOE Joint Genome Institute"/>
            <person name="Copeland A."/>
            <person name="Lucas S."/>
            <person name="Lapidus A."/>
            <person name="Barry K."/>
            <person name="Detter J.C."/>
            <person name="Glavina del Rio T."/>
            <person name="Hammon N."/>
            <person name="Israni S."/>
            <person name="Dalin E."/>
            <person name="Tice H."/>
            <person name="Pitluck S."/>
            <person name="Saunders E."/>
            <person name="Brettin T."/>
            <person name="Bruce D."/>
            <person name="Han C."/>
            <person name="Tapia R."/>
            <person name="Gilna P."/>
            <person name="Schmutz J."/>
            <person name="Larimer F."/>
            <person name="Land M."/>
            <person name="Hauser L."/>
            <person name="Kyrpides N."/>
            <person name="Kim E."/>
            <person name="Karls A.C."/>
            <person name="Bartlett D."/>
            <person name="Higgins B.P."/>
            <person name="Richardson P."/>
        </authorList>
    </citation>
    <scope>NUCLEOTIDE SEQUENCE [LARGE SCALE GENOMIC DNA]</scope>
    <source>
        <strain>T6c / ATCC BAA-1087</strain>
    </source>
</reference>
<evidence type="ECO:0000255" key="1">
    <source>
        <dbReference type="HAMAP-Rule" id="MF_01310"/>
    </source>
</evidence>
<evidence type="ECO:0000305" key="2"/>
<dbReference type="EMBL" id="CP000388">
    <property type="protein sequence ID" value="ABG39538.1"/>
    <property type="molecule type" value="Genomic_DNA"/>
</dbReference>
<dbReference type="RefSeq" id="WP_006990560.1">
    <property type="nucleotide sequence ID" value="NC_008228.1"/>
</dbReference>
<dbReference type="SMR" id="Q15X50"/>
<dbReference type="STRING" id="342610.Patl_1012"/>
<dbReference type="KEGG" id="pat:Patl_1012"/>
<dbReference type="eggNOG" id="COG0100">
    <property type="taxonomic scope" value="Bacteria"/>
</dbReference>
<dbReference type="HOGENOM" id="CLU_072439_5_0_6"/>
<dbReference type="OrthoDB" id="9806415at2"/>
<dbReference type="Proteomes" id="UP000001981">
    <property type="component" value="Chromosome"/>
</dbReference>
<dbReference type="GO" id="GO:1990904">
    <property type="term" value="C:ribonucleoprotein complex"/>
    <property type="evidence" value="ECO:0007669"/>
    <property type="project" value="UniProtKB-KW"/>
</dbReference>
<dbReference type="GO" id="GO:0005840">
    <property type="term" value="C:ribosome"/>
    <property type="evidence" value="ECO:0007669"/>
    <property type="project" value="UniProtKB-KW"/>
</dbReference>
<dbReference type="GO" id="GO:0019843">
    <property type="term" value="F:rRNA binding"/>
    <property type="evidence" value="ECO:0007669"/>
    <property type="project" value="UniProtKB-UniRule"/>
</dbReference>
<dbReference type="GO" id="GO:0003735">
    <property type="term" value="F:structural constituent of ribosome"/>
    <property type="evidence" value="ECO:0007669"/>
    <property type="project" value="InterPro"/>
</dbReference>
<dbReference type="GO" id="GO:0006412">
    <property type="term" value="P:translation"/>
    <property type="evidence" value="ECO:0007669"/>
    <property type="project" value="UniProtKB-UniRule"/>
</dbReference>
<dbReference type="FunFam" id="3.30.420.80:FF:000001">
    <property type="entry name" value="30S ribosomal protein S11"/>
    <property type="match status" value="1"/>
</dbReference>
<dbReference type="Gene3D" id="3.30.420.80">
    <property type="entry name" value="Ribosomal protein S11"/>
    <property type="match status" value="1"/>
</dbReference>
<dbReference type="HAMAP" id="MF_01310">
    <property type="entry name" value="Ribosomal_uS11"/>
    <property type="match status" value="1"/>
</dbReference>
<dbReference type="InterPro" id="IPR001971">
    <property type="entry name" value="Ribosomal_uS11"/>
</dbReference>
<dbReference type="InterPro" id="IPR019981">
    <property type="entry name" value="Ribosomal_uS11_bac-type"/>
</dbReference>
<dbReference type="InterPro" id="IPR018102">
    <property type="entry name" value="Ribosomal_uS11_CS"/>
</dbReference>
<dbReference type="InterPro" id="IPR036967">
    <property type="entry name" value="Ribosomal_uS11_sf"/>
</dbReference>
<dbReference type="NCBIfam" id="NF003698">
    <property type="entry name" value="PRK05309.1"/>
    <property type="match status" value="1"/>
</dbReference>
<dbReference type="NCBIfam" id="TIGR03632">
    <property type="entry name" value="uS11_bact"/>
    <property type="match status" value="1"/>
</dbReference>
<dbReference type="PANTHER" id="PTHR11759">
    <property type="entry name" value="40S RIBOSOMAL PROTEIN S14/30S RIBOSOMAL PROTEIN S11"/>
    <property type="match status" value="1"/>
</dbReference>
<dbReference type="Pfam" id="PF00411">
    <property type="entry name" value="Ribosomal_S11"/>
    <property type="match status" value="1"/>
</dbReference>
<dbReference type="PIRSF" id="PIRSF002131">
    <property type="entry name" value="Ribosomal_S11"/>
    <property type="match status" value="1"/>
</dbReference>
<dbReference type="SUPFAM" id="SSF53137">
    <property type="entry name" value="Translational machinery components"/>
    <property type="match status" value="1"/>
</dbReference>
<dbReference type="PROSITE" id="PS00054">
    <property type="entry name" value="RIBOSOMAL_S11"/>
    <property type="match status" value="1"/>
</dbReference>
<feature type="chain" id="PRO_0000294825" description="Small ribosomal subunit protein uS11">
    <location>
        <begin position="1"/>
        <end position="130"/>
    </location>
</feature>
<proteinExistence type="inferred from homology"/>